<evidence type="ECO:0000255" key="1">
    <source>
        <dbReference type="HAMAP-Rule" id="MF_00048"/>
    </source>
</evidence>
<dbReference type="EMBL" id="CP000283">
    <property type="protein sequence ID" value="ABE37638.1"/>
    <property type="molecule type" value="Genomic_DNA"/>
</dbReference>
<dbReference type="SMR" id="Q13E51"/>
<dbReference type="STRING" id="316057.RPD_0400"/>
<dbReference type="KEGG" id="rpd:RPD_0400"/>
<dbReference type="eggNOG" id="COG0792">
    <property type="taxonomic scope" value="Bacteria"/>
</dbReference>
<dbReference type="HOGENOM" id="CLU_115353_0_2_5"/>
<dbReference type="BioCyc" id="RPAL316057:RPD_RS02060-MONOMER"/>
<dbReference type="Proteomes" id="UP000001818">
    <property type="component" value="Chromosome"/>
</dbReference>
<dbReference type="GO" id="GO:0003676">
    <property type="term" value="F:nucleic acid binding"/>
    <property type="evidence" value="ECO:0007669"/>
    <property type="project" value="InterPro"/>
</dbReference>
<dbReference type="Gene3D" id="3.40.1350.10">
    <property type="match status" value="1"/>
</dbReference>
<dbReference type="HAMAP" id="MF_00048">
    <property type="entry name" value="UPF0102"/>
    <property type="match status" value="1"/>
</dbReference>
<dbReference type="InterPro" id="IPR011335">
    <property type="entry name" value="Restrct_endonuc-II-like"/>
</dbReference>
<dbReference type="InterPro" id="IPR011856">
    <property type="entry name" value="tRNA_endonuc-like_dom_sf"/>
</dbReference>
<dbReference type="InterPro" id="IPR003509">
    <property type="entry name" value="UPF0102_YraN-like"/>
</dbReference>
<dbReference type="NCBIfam" id="NF009151">
    <property type="entry name" value="PRK12497.1-5"/>
    <property type="match status" value="1"/>
</dbReference>
<dbReference type="NCBIfam" id="TIGR00252">
    <property type="entry name" value="YraN family protein"/>
    <property type="match status" value="1"/>
</dbReference>
<dbReference type="PANTHER" id="PTHR34039">
    <property type="entry name" value="UPF0102 PROTEIN YRAN"/>
    <property type="match status" value="1"/>
</dbReference>
<dbReference type="PANTHER" id="PTHR34039:SF1">
    <property type="entry name" value="UPF0102 PROTEIN YRAN"/>
    <property type="match status" value="1"/>
</dbReference>
<dbReference type="Pfam" id="PF02021">
    <property type="entry name" value="UPF0102"/>
    <property type="match status" value="1"/>
</dbReference>
<dbReference type="SUPFAM" id="SSF52980">
    <property type="entry name" value="Restriction endonuclease-like"/>
    <property type="match status" value="1"/>
</dbReference>
<organism>
    <name type="scientific">Rhodopseudomonas palustris (strain BisB5)</name>
    <dbReference type="NCBI Taxonomy" id="316057"/>
    <lineage>
        <taxon>Bacteria</taxon>
        <taxon>Pseudomonadati</taxon>
        <taxon>Pseudomonadota</taxon>
        <taxon>Alphaproteobacteria</taxon>
        <taxon>Hyphomicrobiales</taxon>
        <taxon>Nitrobacteraceae</taxon>
        <taxon>Rhodopseudomonas</taxon>
    </lineage>
</organism>
<sequence>MAKTRSPSTPPAPERVAAFQTGISAETRAAAFLMAKGYRILARRFKTPYGEIDIVAQRRKLIAFVEVKARARLDDAAYALTPRQQQRIIAAAEAWLVANPDHATYELRFDAMLVAPKRLPQHLPAAFDASP</sequence>
<protein>
    <recommendedName>
        <fullName evidence="1">UPF0102 protein RPD_0400</fullName>
    </recommendedName>
</protein>
<accession>Q13E51</accession>
<reference key="1">
    <citation type="submission" date="2006-03" db="EMBL/GenBank/DDBJ databases">
        <title>Complete sequence of Rhodopseudomonas palustris BisB5.</title>
        <authorList>
            <consortium name="US DOE Joint Genome Institute"/>
            <person name="Copeland A."/>
            <person name="Lucas S."/>
            <person name="Lapidus A."/>
            <person name="Barry K."/>
            <person name="Detter J.C."/>
            <person name="Glavina del Rio T."/>
            <person name="Hammon N."/>
            <person name="Israni S."/>
            <person name="Dalin E."/>
            <person name="Tice H."/>
            <person name="Pitluck S."/>
            <person name="Chain P."/>
            <person name="Malfatti S."/>
            <person name="Shin M."/>
            <person name="Vergez L."/>
            <person name="Schmutz J."/>
            <person name="Larimer F."/>
            <person name="Land M."/>
            <person name="Hauser L."/>
            <person name="Pelletier D.A."/>
            <person name="Kyrpides N."/>
            <person name="Lykidis A."/>
            <person name="Oda Y."/>
            <person name="Harwood C.S."/>
            <person name="Richardson P."/>
        </authorList>
    </citation>
    <scope>NUCLEOTIDE SEQUENCE [LARGE SCALE GENOMIC DNA]</scope>
    <source>
        <strain>BisB5</strain>
    </source>
</reference>
<feature type="chain" id="PRO_0000336251" description="UPF0102 protein RPD_0400">
    <location>
        <begin position="1"/>
        <end position="131"/>
    </location>
</feature>
<name>Y400_RHOPS</name>
<proteinExistence type="inferred from homology"/>
<gene>
    <name type="ordered locus">RPD_0400</name>
</gene>
<comment type="similarity">
    <text evidence="1">Belongs to the UPF0102 family.</text>
</comment>